<evidence type="ECO:0000255" key="1">
    <source>
        <dbReference type="PROSITE-ProRule" id="PRU00108"/>
    </source>
</evidence>
<evidence type="ECO:0000305" key="2"/>
<organism>
    <name type="scientific">Ovis aries</name>
    <name type="common">Sheep</name>
    <dbReference type="NCBI Taxonomy" id="9940"/>
    <lineage>
        <taxon>Eukaryota</taxon>
        <taxon>Metazoa</taxon>
        <taxon>Chordata</taxon>
        <taxon>Craniata</taxon>
        <taxon>Vertebrata</taxon>
        <taxon>Euteleostomi</taxon>
        <taxon>Mammalia</taxon>
        <taxon>Eutheria</taxon>
        <taxon>Laurasiatheria</taxon>
        <taxon>Artiodactyla</taxon>
        <taxon>Ruminantia</taxon>
        <taxon>Pecora</taxon>
        <taxon>Bovidae</taxon>
        <taxon>Caprinae</taxon>
        <taxon>Ovis</taxon>
    </lineage>
</organism>
<dbReference type="EMBL" id="U61979">
    <property type="protein sequence ID" value="AAB04755.1"/>
    <property type="molecule type" value="mRNA"/>
</dbReference>
<dbReference type="SMR" id="Q28600"/>
<dbReference type="STRING" id="9940.ENSOARP00000007395"/>
<dbReference type="PaxDb" id="9940-ENSOARP00000007395"/>
<dbReference type="eggNOG" id="KOG0489">
    <property type="taxonomic scope" value="Eukaryota"/>
</dbReference>
<dbReference type="Proteomes" id="UP000002356">
    <property type="component" value="Unplaced"/>
</dbReference>
<dbReference type="GO" id="GO:0005634">
    <property type="term" value="C:nucleus"/>
    <property type="evidence" value="ECO:0007669"/>
    <property type="project" value="UniProtKB-SubCell"/>
</dbReference>
<dbReference type="GO" id="GO:0000981">
    <property type="term" value="F:DNA-binding transcription factor activity, RNA polymerase II-specific"/>
    <property type="evidence" value="ECO:0007669"/>
    <property type="project" value="InterPro"/>
</dbReference>
<dbReference type="GO" id="GO:0000978">
    <property type="term" value="F:RNA polymerase II cis-regulatory region sequence-specific DNA binding"/>
    <property type="evidence" value="ECO:0007669"/>
    <property type="project" value="TreeGrafter"/>
</dbReference>
<dbReference type="GO" id="GO:0009952">
    <property type="term" value="P:anterior/posterior pattern specification"/>
    <property type="evidence" value="ECO:0007669"/>
    <property type="project" value="TreeGrafter"/>
</dbReference>
<dbReference type="CDD" id="cd00086">
    <property type="entry name" value="homeodomain"/>
    <property type="match status" value="1"/>
</dbReference>
<dbReference type="FunFam" id="1.10.10.60:FF:000017">
    <property type="entry name" value="Homeobox protein antennapedia"/>
    <property type="match status" value="1"/>
</dbReference>
<dbReference type="Gene3D" id="1.10.10.60">
    <property type="entry name" value="Homeodomain-like"/>
    <property type="match status" value="1"/>
</dbReference>
<dbReference type="InterPro" id="IPR050296">
    <property type="entry name" value="Antp_homeobox"/>
</dbReference>
<dbReference type="InterPro" id="IPR001356">
    <property type="entry name" value="HD"/>
</dbReference>
<dbReference type="InterPro" id="IPR020479">
    <property type="entry name" value="HD_metazoa"/>
</dbReference>
<dbReference type="InterPro" id="IPR017970">
    <property type="entry name" value="Homeobox_CS"/>
</dbReference>
<dbReference type="InterPro" id="IPR009057">
    <property type="entry name" value="Homeodomain-like_sf"/>
</dbReference>
<dbReference type="PANTHER" id="PTHR45659">
    <property type="entry name" value="HOMEOBOX PROTEIN HOX"/>
    <property type="match status" value="1"/>
</dbReference>
<dbReference type="PANTHER" id="PTHR45659:SF12">
    <property type="entry name" value="HOMEOBOX PROTEIN HOX-A7"/>
    <property type="match status" value="1"/>
</dbReference>
<dbReference type="Pfam" id="PF00046">
    <property type="entry name" value="Homeodomain"/>
    <property type="match status" value="1"/>
</dbReference>
<dbReference type="PRINTS" id="PR00024">
    <property type="entry name" value="HOMEOBOX"/>
</dbReference>
<dbReference type="SMART" id="SM00389">
    <property type="entry name" value="HOX"/>
    <property type="match status" value="1"/>
</dbReference>
<dbReference type="SUPFAM" id="SSF46689">
    <property type="entry name" value="Homeodomain-like"/>
    <property type="match status" value="1"/>
</dbReference>
<dbReference type="PROSITE" id="PS00027">
    <property type="entry name" value="HOMEOBOX_1"/>
    <property type="match status" value="1"/>
</dbReference>
<dbReference type="PROSITE" id="PS50071">
    <property type="entry name" value="HOMEOBOX_2"/>
    <property type="match status" value="1"/>
</dbReference>
<keyword id="KW-0217">Developmental protein</keyword>
<keyword id="KW-0238">DNA-binding</keyword>
<keyword id="KW-0371">Homeobox</keyword>
<keyword id="KW-0539">Nucleus</keyword>
<keyword id="KW-1185">Reference proteome</keyword>
<keyword id="KW-0804">Transcription</keyword>
<keyword id="KW-0805">Transcription regulation</keyword>
<accession>Q28600</accession>
<reference key="1">
    <citation type="submission" date="1996-06" db="EMBL/GenBank/DDBJ databases">
        <authorList>
            <person name="Roche P.J."/>
        </authorList>
    </citation>
    <scope>NUCLEOTIDE SEQUENCE [MRNA]</scope>
</reference>
<comment type="function">
    <text>Sequence-specific transcription factor which is part of a developmental regulatory system that provides cells with specific positional identities on the anterior-posterior axis.</text>
</comment>
<comment type="subcellular location">
    <subcellularLocation>
        <location>Nucleus</location>
    </subcellularLocation>
</comment>
<comment type="similarity">
    <text evidence="2">Belongs to the Antp homeobox family.</text>
</comment>
<gene>
    <name type="primary">HOXA7</name>
    <name type="synonym">HOXA-7</name>
</gene>
<protein>
    <recommendedName>
        <fullName>Homeobox protein Hox-A7</fullName>
    </recommendedName>
</protein>
<proteinExistence type="evidence at transcript level"/>
<name>HXA7_SHEEP</name>
<sequence length="71" mass="8888">GPDRKRGRQTYTRYQTLELEKEFHFNRYLTRRRRIEIAHALCLTERQIKIWFQNRRMKWKKEHKEEGPAAS</sequence>
<feature type="chain" id="PRO_0000200074" description="Homeobox protein Hox-A7">
    <location>
        <begin position="1" status="less than"/>
        <end position="71" status="greater than"/>
    </location>
</feature>
<feature type="DNA-binding region" description="Homeobox" evidence="1">
    <location>
        <begin position="4"/>
        <end position="63"/>
    </location>
</feature>
<feature type="non-terminal residue">
    <location>
        <position position="1"/>
    </location>
</feature>
<feature type="non-terminal residue">
    <location>
        <position position="71"/>
    </location>
</feature>